<reference key="1">
    <citation type="submission" date="2005-09" db="EMBL/GenBank/DDBJ databases">
        <title>Complete genome sequence of Clostridium kluyveri and comparative genomics of Clostridia species.</title>
        <authorList>
            <person name="Inui M."/>
            <person name="Nonaka H."/>
            <person name="Shinoda Y."/>
            <person name="Ikenaga Y."/>
            <person name="Abe M."/>
            <person name="Naito K."/>
            <person name="Vertes A.A."/>
            <person name="Yukawa H."/>
        </authorList>
    </citation>
    <scope>NUCLEOTIDE SEQUENCE [LARGE SCALE GENOMIC DNA]</scope>
    <source>
        <strain>NBRC 12016</strain>
    </source>
</reference>
<protein>
    <recommendedName>
        <fullName evidence="1">Gamma-glutamyl phosphate reductase</fullName>
        <shortName evidence="1">GPR</shortName>
        <ecNumber evidence="1">1.2.1.41</ecNumber>
    </recommendedName>
    <alternativeName>
        <fullName evidence="1">Glutamate-5-semialdehyde dehydrogenase</fullName>
    </alternativeName>
    <alternativeName>
        <fullName evidence="1">Glutamyl-gamma-semialdehyde dehydrogenase</fullName>
        <shortName evidence="1">GSA dehydrogenase</shortName>
    </alternativeName>
</protein>
<keyword id="KW-0028">Amino-acid biosynthesis</keyword>
<keyword id="KW-0963">Cytoplasm</keyword>
<keyword id="KW-0521">NADP</keyword>
<keyword id="KW-0560">Oxidoreductase</keyword>
<keyword id="KW-0641">Proline biosynthesis</keyword>
<name>PROA_CLOK1</name>
<feature type="chain" id="PRO_1000193590" description="Gamma-glutamyl phosphate reductase">
    <location>
        <begin position="1"/>
        <end position="418"/>
    </location>
</feature>
<dbReference type="EC" id="1.2.1.41" evidence="1"/>
<dbReference type="EMBL" id="AP009049">
    <property type="protein sequence ID" value="BAH07480.1"/>
    <property type="molecule type" value="Genomic_DNA"/>
</dbReference>
<dbReference type="RefSeq" id="WP_012103077.1">
    <property type="nucleotide sequence ID" value="NC_011837.1"/>
</dbReference>
<dbReference type="SMR" id="B9E4Q5"/>
<dbReference type="KEGG" id="ckr:CKR_2429"/>
<dbReference type="HOGENOM" id="CLU_030231_0_0_9"/>
<dbReference type="UniPathway" id="UPA00098">
    <property type="reaction ID" value="UER00360"/>
</dbReference>
<dbReference type="Proteomes" id="UP000007969">
    <property type="component" value="Chromosome"/>
</dbReference>
<dbReference type="GO" id="GO:0005737">
    <property type="term" value="C:cytoplasm"/>
    <property type="evidence" value="ECO:0007669"/>
    <property type="project" value="UniProtKB-SubCell"/>
</dbReference>
<dbReference type="GO" id="GO:0004350">
    <property type="term" value="F:glutamate-5-semialdehyde dehydrogenase activity"/>
    <property type="evidence" value="ECO:0007669"/>
    <property type="project" value="UniProtKB-UniRule"/>
</dbReference>
<dbReference type="GO" id="GO:0050661">
    <property type="term" value="F:NADP binding"/>
    <property type="evidence" value="ECO:0007669"/>
    <property type="project" value="InterPro"/>
</dbReference>
<dbReference type="GO" id="GO:0055129">
    <property type="term" value="P:L-proline biosynthetic process"/>
    <property type="evidence" value="ECO:0007669"/>
    <property type="project" value="UniProtKB-UniRule"/>
</dbReference>
<dbReference type="CDD" id="cd07079">
    <property type="entry name" value="ALDH_F18-19_ProA-GPR"/>
    <property type="match status" value="1"/>
</dbReference>
<dbReference type="FunFam" id="3.40.309.10:FF:000006">
    <property type="entry name" value="Gamma-glutamyl phosphate reductase"/>
    <property type="match status" value="1"/>
</dbReference>
<dbReference type="Gene3D" id="3.40.605.10">
    <property type="entry name" value="Aldehyde Dehydrogenase, Chain A, domain 1"/>
    <property type="match status" value="1"/>
</dbReference>
<dbReference type="Gene3D" id="3.40.309.10">
    <property type="entry name" value="Aldehyde Dehydrogenase, Chain A, domain 2"/>
    <property type="match status" value="1"/>
</dbReference>
<dbReference type="HAMAP" id="MF_00412">
    <property type="entry name" value="ProA"/>
    <property type="match status" value="1"/>
</dbReference>
<dbReference type="InterPro" id="IPR016161">
    <property type="entry name" value="Ald_DH/histidinol_DH"/>
</dbReference>
<dbReference type="InterPro" id="IPR016163">
    <property type="entry name" value="Ald_DH_C"/>
</dbReference>
<dbReference type="InterPro" id="IPR016162">
    <property type="entry name" value="Ald_DH_N"/>
</dbReference>
<dbReference type="InterPro" id="IPR015590">
    <property type="entry name" value="Aldehyde_DH_dom"/>
</dbReference>
<dbReference type="InterPro" id="IPR020593">
    <property type="entry name" value="G-glutamylP_reductase_CS"/>
</dbReference>
<dbReference type="InterPro" id="IPR012134">
    <property type="entry name" value="Glu-5-SA_DH"/>
</dbReference>
<dbReference type="InterPro" id="IPR000965">
    <property type="entry name" value="GPR_dom"/>
</dbReference>
<dbReference type="NCBIfam" id="NF001221">
    <property type="entry name" value="PRK00197.1"/>
    <property type="match status" value="1"/>
</dbReference>
<dbReference type="NCBIfam" id="TIGR00407">
    <property type="entry name" value="proA"/>
    <property type="match status" value="1"/>
</dbReference>
<dbReference type="PANTHER" id="PTHR11063:SF8">
    <property type="entry name" value="DELTA-1-PYRROLINE-5-CARBOXYLATE SYNTHASE"/>
    <property type="match status" value="1"/>
</dbReference>
<dbReference type="PANTHER" id="PTHR11063">
    <property type="entry name" value="GLUTAMATE SEMIALDEHYDE DEHYDROGENASE"/>
    <property type="match status" value="1"/>
</dbReference>
<dbReference type="Pfam" id="PF00171">
    <property type="entry name" value="Aldedh"/>
    <property type="match status" value="1"/>
</dbReference>
<dbReference type="PIRSF" id="PIRSF000151">
    <property type="entry name" value="GPR"/>
    <property type="match status" value="1"/>
</dbReference>
<dbReference type="SUPFAM" id="SSF53720">
    <property type="entry name" value="ALDH-like"/>
    <property type="match status" value="1"/>
</dbReference>
<dbReference type="PROSITE" id="PS01223">
    <property type="entry name" value="PROA"/>
    <property type="match status" value="1"/>
</dbReference>
<sequence>MDIYDCILEKAKNANRAARTLSNMSTDIKNAALIKMAEELNKNKDDILKANMLDLEDAKSSGKNDAFIDRLTLNENRIESMASGLMKVASLPDPIGEVTRMWKKSNELNIGRVRVPLGTIGIIYEARPNVTVDAAALCVKSGNSVILKGGKEAINSNLAIYNAINKGAIEAGLPAGTIEFINMTERKAVEVLMKLNEYVDVLIPRGGSGLIKSVVENSTVPVIETGIGNCHVYVDSSADLTMAENIVINAKTQRPGVCNAMETLLVHEAVAEKLIPHLTETLSKMGVEIRGCLKTKRLIPDIRLATAEDYAQEFLDLILAVKVVSSLDEALDHIYKYGTKHSEAIITNDYTSSQRFLREVDAAAVYVNASTRFTDGEEFGFGAEIGISTQKLHARGPMGLNELTTIKYIVYGEGQIRE</sequence>
<gene>
    <name evidence="1" type="primary">proA</name>
    <name type="ordered locus">CKR_2429</name>
</gene>
<evidence type="ECO:0000255" key="1">
    <source>
        <dbReference type="HAMAP-Rule" id="MF_00412"/>
    </source>
</evidence>
<proteinExistence type="inferred from homology"/>
<accession>B9E4Q5</accession>
<organism>
    <name type="scientific">Clostridium kluyveri (strain NBRC 12016)</name>
    <dbReference type="NCBI Taxonomy" id="583346"/>
    <lineage>
        <taxon>Bacteria</taxon>
        <taxon>Bacillati</taxon>
        <taxon>Bacillota</taxon>
        <taxon>Clostridia</taxon>
        <taxon>Eubacteriales</taxon>
        <taxon>Clostridiaceae</taxon>
        <taxon>Clostridium</taxon>
    </lineage>
</organism>
<comment type="function">
    <text evidence="1">Catalyzes the NADPH-dependent reduction of L-glutamate 5-phosphate into L-glutamate 5-semialdehyde and phosphate. The product spontaneously undergoes cyclization to form 1-pyrroline-5-carboxylate.</text>
</comment>
<comment type="catalytic activity">
    <reaction evidence="1">
        <text>L-glutamate 5-semialdehyde + phosphate + NADP(+) = L-glutamyl 5-phosphate + NADPH + H(+)</text>
        <dbReference type="Rhea" id="RHEA:19541"/>
        <dbReference type="ChEBI" id="CHEBI:15378"/>
        <dbReference type="ChEBI" id="CHEBI:43474"/>
        <dbReference type="ChEBI" id="CHEBI:57783"/>
        <dbReference type="ChEBI" id="CHEBI:58066"/>
        <dbReference type="ChEBI" id="CHEBI:58274"/>
        <dbReference type="ChEBI" id="CHEBI:58349"/>
        <dbReference type="EC" id="1.2.1.41"/>
    </reaction>
</comment>
<comment type="pathway">
    <text evidence="1">Amino-acid biosynthesis; L-proline biosynthesis; L-glutamate 5-semialdehyde from L-glutamate: step 2/2.</text>
</comment>
<comment type="subcellular location">
    <subcellularLocation>
        <location evidence="1">Cytoplasm</location>
    </subcellularLocation>
</comment>
<comment type="similarity">
    <text evidence="1">Belongs to the gamma-glutamyl phosphate reductase family.</text>
</comment>